<organism>
    <name type="scientific">Rhizobium etli (strain CIAT 652)</name>
    <dbReference type="NCBI Taxonomy" id="491916"/>
    <lineage>
        <taxon>Bacteria</taxon>
        <taxon>Pseudomonadati</taxon>
        <taxon>Pseudomonadota</taxon>
        <taxon>Alphaproteobacteria</taxon>
        <taxon>Hyphomicrobiales</taxon>
        <taxon>Rhizobiaceae</taxon>
        <taxon>Rhizobium/Agrobacterium group</taxon>
        <taxon>Rhizobium</taxon>
    </lineage>
</organism>
<comment type="function">
    <text evidence="1">Catalyzes the oxidation of either pyridoxine 5'-phosphate (PNP) or pyridoxamine 5'-phosphate (PMP) into pyridoxal 5'-phosphate (PLP).</text>
</comment>
<comment type="catalytic activity">
    <reaction evidence="1">
        <text>pyridoxamine 5'-phosphate + O2 + H2O = pyridoxal 5'-phosphate + H2O2 + NH4(+)</text>
        <dbReference type="Rhea" id="RHEA:15817"/>
        <dbReference type="ChEBI" id="CHEBI:15377"/>
        <dbReference type="ChEBI" id="CHEBI:15379"/>
        <dbReference type="ChEBI" id="CHEBI:16240"/>
        <dbReference type="ChEBI" id="CHEBI:28938"/>
        <dbReference type="ChEBI" id="CHEBI:58451"/>
        <dbReference type="ChEBI" id="CHEBI:597326"/>
        <dbReference type="EC" id="1.4.3.5"/>
    </reaction>
</comment>
<comment type="catalytic activity">
    <reaction evidence="1">
        <text>pyridoxine 5'-phosphate + O2 = pyridoxal 5'-phosphate + H2O2</text>
        <dbReference type="Rhea" id="RHEA:15149"/>
        <dbReference type="ChEBI" id="CHEBI:15379"/>
        <dbReference type="ChEBI" id="CHEBI:16240"/>
        <dbReference type="ChEBI" id="CHEBI:58589"/>
        <dbReference type="ChEBI" id="CHEBI:597326"/>
        <dbReference type="EC" id="1.4.3.5"/>
    </reaction>
</comment>
<comment type="cofactor">
    <cofactor evidence="1">
        <name>FMN</name>
        <dbReference type="ChEBI" id="CHEBI:58210"/>
    </cofactor>
    <text evidence="1">Binds 1 FMN per subunit.</text>
</comment>
<comment type="pathway">
    <text evidence="1">Cofactor metabolism; pyridoxal 5'-phosphate salvage; pyridoxal 5'-phosphate from pyridoxamine 5'-phosphate: step 1/1.</text>
</comment>
<comment type="pathway">
    <text evidence="1">Cofactor metabolism; pyridoxal 5'-phosphate salvage; pyridoxal 5'-phosphate from pyridoxine 5'-phosphate: step 1/1.</text>
</comment>
<comment type="subunit">
    <text evidence="1">Homodimer.</text>
</comment>
<comment type="similarity">
    <text evidence="1">Belongs to the pyridoxamine 5'-phosphate oxidase family.</text>
</comment>
<feature type="chain" id="PRO_1000186328" description="Pyridoxine/pyridoxamine 5'-phosphate oxidase">
    <location>
        <begin position="1"/>
        <end position="206"/>
    </location>
</feature>
<feature type="binding site" evidence="1">
    <location>
        <begin position="53"/>
        <end position="58"/>
    </location>
    <ligand>
        <name>FMN</name>
        <dbReference type="ChEBI" id="CHEBI:58210"/>
    </ligand>
</feature>
<feature type="binding site" evidence="1">
    <location>
        <position position="58"/>
    </location>
    <ligand>
        <name>substrate</name>
    </ligand>
</feature>
<feature type="binding site" evidence="1">
    <location>
        <begin position="68"/>
        <end position="69"/>
    </location>
    <ligand>
        <name>FMN</name>
        <dbReference type="ChEBI" id="CHEBI:58210"/>
    </ligand>
</feature>
<feature type="binding site" evidence="1">
    <location>
        <position position="75"/>
    </location>
    <ligand>
        <name>FMN</name>
        <dbReference type="ChEBI" id="CHEBI:58210"/>
    </ligand>
</feature>
<feature type="binding site" evidence="1">
    <location>
        <position position="97"/>
    </location>
    <ligand>
        <name>FMN</name>
        <dbReference type="ChEBI" id="CHEBI:58210"/>
    </ligand>
</feature>
<feature type="binding site" evidence="1">
    <location>
        <position position="115"/>
    </location>
    <ligand>
        <name>substrate</name>
    </ligand>
</feature>
<feature type="binding site" evidence="1">
    <location>
        <position position="119"/>
    </location>
    <ligand>
        <name>substrate</name>
    </ligand>
</feature>
<feature type="binding site" evidence="1">
    <location>
        <position position="123"/>
    </location>
    <ligand>
        <name>substrate</name>
    </ligand>
</feature>
<feature type="binding site" evidence="1">
    <location>
        <begin position="132"/>
        <end position="133"/>
    </location>
    <ligand>
        <name>FMN</name>
        <dbReference type="ChEBI" id="CHEBI:58210"/>
    </ligand>
</feature>
<feature type="binding site" evidence="1">
    <location>
        <position position="177"/>
    </location>
    <ligand>
        <name>FMN</name>
        <dbReference type="ChEBI" id="CHEBI:58210"/>
    </ligand>
</feature>
<feature type="binding site" evidence="1">
    <location>
        <begin position="183"/>
        <end position="185"/>
    </location>
    <ligand>
        <name>substrate</name>
    </ligand>
</feature>
<feature type="binding site" evidence="1">
    <location>
        <position position="187"/>
    </location>
    <ligand>
        <name>FMN</name>
        <dbReference type="ChEBI" id="CHEBI:58210"/>
    </ligand>
</feature>
<accession>B3PSA1</accession>
<name>PDXH_RHIE6</name>
<proteinExistence type="inferred from homology"/>
<evidence type="ECO:0000255" key="1">
    <source>
        <dbReference type="HAMAP-Rule" id="MF_01629"/>
    </source>
</evidence>
<gene>
    <name evidence="1" type="primary">pdxH</name>
    <name type="ordered locus">RHECIAT_CH0001038</name>
</gene>
<reference key="1">
    <citation type="journal article" date="2010" name="Appl. Environ. Microbiol.">
        <title>Conserved symbiotic plasmid DNA sequences in the multireplicon pangenomic structure of Rhizobium etli.</title>
        <authorList>
            <person name="Gonzalez V."/>
            <person name="Acosta J.L."/>
            <person name="Santamaria R.I."/>
            <person name="Bustos P."/>
            <person name="Fernandez J.L."/>
            <person name="Hernandez Gonzalez I.L."/>
            <person name="Diaz R."/>
            <person name="Flores M."/>
            <person name="Palacios R."/>
            <person name="Mora J."/>
            <person name="Davila G."/>
        </authorList>
    </citation>
    <scope>NUCLEOTIDE SEQUENCE [LARGE SCALE GENOMIC DNA]</scope>
    <source>
        <strain>CIAT 652</strain>
    </source>
</reference>
<protein>
    <recommendedName>
        <fullName evidence="1">Pyridoxine/pyridoxamine 5'-phosphate oxidase</fullName>
        <ecNumber evidence="1">1.4.3.5</ecNumber>
    </recommendedName>
    <alternativeName>
        <fullName evidence="1">PNP/PMP oxidase</fullName>
        <shortName evidence="1">PNPOx</shortName>
    </alternativeName>
    <alternativeName>
        <fullName evidence="1">Pyridoxal 5'-phosphate synthase</fullName>
    </alternativeName>
</protein>
<keyword id="KW-0285">Flavoprotein</keyword>
<keyword id="KW-0288">FMN</keyword>
<keyword id="KW-0560">Oxidoreductase</keyword>
<keyword id="KW-0664">Pyridoxine biosynthesis</keyword>
<sequence>MSANELTSGDFTESGEPFKLFAEWLKEAEASEPNDPNAVALATVDEDGLPNVRMVLLKGFDDDGFVFYTNFESQKGREILGQRKAAMCFHWKSLRRQVRLRGPVEIVSDAEADAYFKTRARGSRIGAWASKQSRPLESRFALEKAVAEYTARYALGEIPRPAHWSGFRIRPTSIEFWKDQAFRLHDRIEFRRPSPVGAWEKVRMYP</sequence>
<dbReference type="EC" id="1.4.3.5" evidence="1"/>
<dbReference type="EMBL" id="CP001074">
    <property type="protein sequence ID" value="ACE90023.1"/>
    <property type="molecule type" value="Genomic_DNA"/>
</dbReference>
<dbReference type="SMR" id="B3PSA1"/>
<dbReference type="KEGG" id="rec:RHECIAT_CH0001038"/>
<dbReference type="eggNOG" id="COG0259">
    <property type="taxonomic scope" value="Bacteria"/>
</dbReference>
<dbReference type="HOGENOM" id="CLU_032263_2_3_5"/>
<dbReference type="UniPathway" id="UPA01068">
    <property type="reaction ID" value="UER00304"/>
</dbReference>
<dbReference type="UniPathway" id="UPA01068">
    <property type="reaction ID" value="UER00305"/>
</dbReference>
<dbReference type="Proteomes" id="UP000008817">
    <property type="component" value="Chromosome"/>
</dbReference>
<dbReference type="GO" id="GO:0010181">
    <property type="term" value="F:FMN binding"/>
    <property type="evidence" value="ECO:0007669"/>
    <property type="project" value="UniProtKB-UniRule"/>
</dbReference>
<dbReference type="GO" id="GO:0004733">
    <property type="term" value="F:pyridoxamine phosphate oxidase activity"/>
    <property type="evidence" value="ECO:0007669"/>
    <property type="project" value="UniProtKB-UniRule"/>
</dbReference>
<dbReference type="GO" id="GO:0008615">
    <property type="term" value="P:pyridoxine biosynthetic process"/>
    <property type="evidence" value="ECO:0007669"/>
    <property type="project" value="UniProtKB-KW"/>
</dbReference>
<dbReference type="Gene3D" id="2.30.110.10">
    <property type="entry name" value="Electron Transport, Fmn-binding Protein, Chain A"/>
    <property type="match status" value="1"/>
</dbReference>
<dbReference type="HAMAP" id="MF_01629">
    <property type="entry name" value="PdxH"/>
    <property type="match status" value="1"/>
</dbReference>
<dbReference type="InterPro" id="IPR000659">
    <property type="entry name" value="Pyridox_Oxase"/>
</dbReference>
<dbReference type="InterPro" id="IPR011576">
    <property type="entry name" value="Pyridox_Oxase_N"/>
</dbReference>
<dbReference type="InterPro" id="IPR019576">
    <property type="entry name" value="Pyridoxamine_oxidase_dimer_C"/>
</dbReference>
<dbReference type="InterPro" id="IPR012349">
    <property type="entry name" value="Split_barrel_FMN-bd"/>
</dbReference>
<dbReference type="NCBIfam" id="TIGR00558">
    <property type="entry name" value="pdxH"/>
    <property type="match status" value="1"/>
</dbReference>
<dbReference type="NCBIfam" id="NF004231">
    <property type="entry name" value="PRK05679.1"/>
    <property type="match status" value="1"/>
</dbReference>
<dbReference type="PANTHER" id="PTHR10851:SF0">
    <property type="entry name" value="PYRIDOXINE-5'-PHOSPHATE OXIDASE"/>
    <property type="match status" value="1"/>
</dbReference>
<dbReference type="PANTHER" id="PTHR10851">
    <property type="entry name" value="PYRIDOXINE-5-PHOSPHATE OXIDASE"/>
    <property type="match status" value="1"/>
</dbReference>
<dbReference type="Pfam" id="PF10590">
    <property type="entry name" value="PNP_phzG_C"/>
    <property type="match status" value="1"/>
</dbReference>
<dbReference type="Pfam" id="PF01243">
    <property type="entry name" value="PNPOx_N"/>
    <property type="match status" value="1"/>
</dbReference>
<dbReference type="PIRSF" id="PIRSF000190">
    <property type="entry name" value="Pyd_amn-ph_oxd"/>
    <property type="match status" value="1"/>
</dbReference>
<dbReference type="SUPFAM" id="SSF50475">
    <property type="entry name" value="FMN-binding split barrel"/>
    <property type="match status" value="1"/>
</dbReference>